<sequence length="545" mass="61011">MSYSIGIDYGTASGRVFLINTTNGQVVSKFVKPYTHGVIESELNGLKIPHTYALQNSNDYLEIMEEGISYIVRESKIDPDNIVGIGIDFTSSTIIFTDENLNPVHNLKQFKNNPHAYVKLWKHHGAYKEAEKLYQTAIENNNKWLGHYGYNVSSEWMIPKIMEVMNRAPEIMEKTAYIMEAGDWIVNKLTNKNVRSNCGLGFKAFWEEETGFHYDLFDKIDPKLSKVIQDKVSAPVVNIGEAVGKLDDKMAQKLGLSKETMVSPFIIDAHASLLGIGSEKDKEMTMVMGTSTCHLMLNEKQHQVPGISGSVKGAIIPELFAYEAGQSAVGDLFEYVAKQAPKSYVDEAENRNMTVFELMNEKIKHQMPGESGLIALDWHNGNRSVLSDSNLTGCIFGLTLQTKHEDIYRAYLEATAFGTKMIMQQYQDWHMEVEKVFACGGIPKKNAVMMDIYANVLNKKLIVMDSEYAPAIGAAILGAVSGGAHNSINDAVDAMKEPILYEINPEAEKVQRYETLFKAYKALHDIHGYKKANIMKDIQSLRVEG</sequence>
<organism>
    <name type="scientific">Staphylococcus aureus (strain USA300)</name>
    <dbReference type="NCBI Taxonomy" id="367830"/>
    <lineage>
        <taxon>Bacteria</taxon>
        <taxon>Bacillati</taxon>
        <taxon>Bacillota</taxon>
        <taxon>Bacilli</taxon>
        <taxon>Bacillales</taxon>
        <taxon>Staphylococcaceae</taxon>
        <taxon>Staphylococcus</taxon>
    </lineage>
</organism>
<name>ARAB_STAA3</name>
<comment type="catalytic activity">
    <reaction evidence="1">
        <text>D-ribulose + ATP = D-ribulose 5-phosphate + ADP + H(+)</text>
        <dbReference type="Rhea" id="RHEA:17601"/>
        <dbReference type="ChEBI" id="CHEBI:15378"/>
        <dbReference type="ChEBI" id="CHEBI:17173"/>
        <dbReference type="ChEBI" id="CHEBI:30616"/>
        <dbReference type="ChEBI" id="CHEBI:58121"/>
        <dbReference type="ChEBI" id="CHEBI:456216"/>
        <dbReference type="EC" id="2.7.1.16"/>
    </reaction>
</comment>
<comment type="catalytic activity">
    <reaction evidence="1">
        <text>L-ribulose + ATP = L-ribulose 5-phosphate + ADP + H(+)</text>
        <dbReference type="Rhea" id="RHEA:22072"/>
        <dbReference type="ChEBI" id="CHEBI:15378"/>
        <dbReference type="ChEBI" id="CHEBI:16880"/>
        <dbReference type="ChEBI" id="CHEBI:30616"/>
        <dbReference type="ChEBI" id="CHEBI:58226"/>
        <dbReference type="ChEBI" id="CHEBI:456216"/>
        <dbReference type="EC" id="2.7.1.16"/>
    </reaction>
</comment>
<comment type="pathway">
    <text evidence="1">Carbohydrate degradation; L-arabinose degradation via L-ribulose; D-xylulose 5-phosphate from L-arabinose (bacterial route): step 2/3.</text>
</comment>
<comment type="similarity">
    <text evidence="1">Belongs to the ribulokinase family.</text>
</comment>
<evidence type="ECO:0000255" key="1">
    <source>
        <dbReference type="HAMAP-Rule" id="MF_00520"/>
    </source>
</evidence>
<keyword id="KW-0054">Arabinose catabolism</keyword>
<keyword id="KW-0067">ATP-binding</keyword>
<keyword id="KW-0119">Carbohydrate metabolism</keyword>
<keyword id="KW-0418">Kinase</keyword>
<keyword id="KW-0547">Nucleotide-binding</keyword>
<keyword id="KW-0808">Transferase</keyword>
<reference key="1">
    <citation type="journal article" date="2006" name="Lancet">
        <title>Complete genome sequence of USA300, an epidemic clone of community-acquired meticillin-resistant Staphylococcus aureus.</title>
        <authorList>
            <person name="Diep B.A."/>
            <person name="Gill S.R."/>
            <person name="Chang R.F."/>
            <person name="Phan T.H."/>
            <person name="Chen J.H."/>
            <person name="Davidson M.G."/>
            <person name="Lin F."/>
            <person name="Lin J."/>
            <person name="Carleton H.A."/>
            <person name="Mongodin E.F."/>
            <person name="Sensabaugh G.F."/>
            <person name="Perdreau-Remington F."/>
        </authorList>
    </citation>
    <scope>NUCLEOTIDE SEQUENCE [LARGE SCALE GENOMIC DNA]</scope>
    <source>
        <strain>USA300</strain>
    </source>
</reference>
<protein>
    <recommendedName>
        <fullName evidence="1">Ribulokinase</fullName>
        <ecNumber evidence="1">2.7.1.16</ecNumber>
    </recommendedName>
</protein>
<gene>
    <name evidence="1" type="primary">araB</name>
    <name type="ordered locus">SAUSA300_0537</name>
</gene>
<dbReference type="EC" id="2.7.1.16" evidence="1"/>
<dbReference type="EMBL" id="CP000255">
    <property type="protein sequence ID" value="ABD21167.1"/>
    <property type="molecule type" value="Genomic_DNA"/>
</dbReference>
<dbReference type="RefSeq" id="WP_000122340.1">
    <property type="nucleotide sequence ID" value="NZ_CP027476.1"/>
</dbReference>
<dbReference type="SMR" id="Q2FJ88"/>
<dbReference type="KEGG" id="saa:SAUSA300_0537"/>
<dbReference type="HOGENOM" id="CLU_009281_9_1_9"/>
<dbReference type="OMA" id="HKAMWHE"/>
<dbReference type="UniPathway" id="UPA00145">
    <property type="reaction ID" value="UER00566"/>
</dbReference>
<dbReference type="Proteomes" id="UP000001939">
    <property type="component" value="Chromosome"/>
</dbReference>
<dbReference type="GO" id="GO:0005737">
    <property type="term" value="C:cytoplasm"/>
    <property type="evidence" value="ECO:0007669"/>
    <property type="project" value="TreeGrafter"/>
</dbReference>
<dbReference type="GO" id="GO:0005524">
    <property type="term" value="F:ATP binding"/>
    <property type="evidence" value="ECO:0007669"/>
    <property type="project" value="UniProtKB-KW"/>
</dbReference>
<dbReference type="GO" id="GO:0019150">
    <property type="term" value="F:D-ribulokinase activity"/>
    <property type="evidence" value="ECO:0007669"/>
    <property type="project" value="TreeGrafter"/>
</dbReference>
<dbReference type="GO" id="GO:0008741">
    <property type="term" value="F:ribulokinase activity"/>
    <property type="evidence" value="ECO:0007669"/>
    <property type="project" value="UniProtKB-UniRule"/>
</dbReference>
<dbReference type="GO" id="GO:0019569">
    <property type="term" value="P:L-arabinose catabolic process to xylulose 5-phosphate"/>
    <property type="evidence" value="ECO:0007669"/>
    <property type="project" value="UniProtKB-UniRule"/>
</dbReference>
<dbReference type="CDD" id="cd07781">
    <property type="entry name" value="ASKHA_NBD_FGGY_L-RBK"/>
    <property type="match status" value="1"/>
</dbReference>
<dbReference type="Gene3D" id="1.20.58.2240">
    <property type="match status" value="1"/>
</dbReference>
<dbReference type="Gene3D" id="3.30.420.40">
    <property type="match status" value="1"/>
</dbReference>
<dbReference type="HAMAP" id="MF_00520">
    <property type="entry name" value="Ribulokinase"/>
    <property type="match status" value="1"/>
</dbReference>
<dbReference type="InterPro" id="IPR043129">
    <property type="entry name" value="ATPase_NBD"/>
</dbReference>
<dbReference type="InterPro" id="IPR000577">
    <property type="entry name" value="Carb_kinase_FGGY"/>
</dbReference>
<dbReference type="InterPro" id="IPR018485">
    <property type="entry name" value="FGGY_C"/>
</dbReference>
<dbReference type="InterPro" id="IPR018484">
    <property type="entry name" value="FGGY_N"/>
</dbReference>
<dbReference type="InterPro" id="IPR005929">
    <property type="entry name" value="Ribulokinase"/>
</dbReference>
<dbReference type="NCBIfam" id="NF003154">
    <property type="entry name" value="PRK04123.1"/>
    <property type="match status" value="1"/>
</dbReference>
<dbReference type="PANTHER" id="PTHR43435:SF4">
    <property type="entry name" value="FGGY CARBOHYDRATE KINASE DOMAIN-CONTAINING PROTEIN"/>
    <property type="match status" value="1"/>
</dbReference>
<dbReference type="PANTHER" id="PTHR43435">
    <property type="entry name" value="RIBULOKINASE"/>
    <property type="match status" value="1"/>
</dbReference>
<dbReference type="Pfam" id="PF02782">
    <property type="entry name" value="FGGY_C"/>
    <property type="match status" value="1"/>
</dbReference>
<dbReference type="Pfam" id="PF00370">
    <property type="entry name" value="FGGY_N"/>
    <property type="match status" value="1"/>
</dbReference>
<dbReference type="PIRSF" id="PIRSF000538">
    <property type="entry name" value="GlpK"/>
    <property type="match status" value="1"/>
</dbReference>
<dbReference type="SUPFAM" id="SSF53067">
    <property type="entry name" value="Actin-like ATPase domain"/>
    <property type="match status" value="2"/>
</dbReference>
<proteinExistence type="inferred from homology"/>
<feature type="chain" id="PRO_0000263409" description="Ribulokinase">
    <location>
        <begin position="1"/>
        <end position="545"/>
    </location>
</feature>
<accession>Q2FJ88</accession>